<feature type="chain" id="PRO_1000088420" description="Erythronate-4-phosphate dehydrogenase">
    <location>
        <begin position="1"/>
        <end position="378"/>
    </location>
</feature>
<feature type="active site" evidence="1">
    <location>
        <position position="208"/>
    </location>
</feature>
<feature type="active site" evidence="1">
    <location>
        <position position="237"/>
    </location>
</feature>
<feature type="active site" description="Proton donor" evidence="1">
    <location>
        <position position="254"/>
    </location>
</feature>
<feature type="binding site" evidence="1">
    <location>
        <position position="45"/>
    </location>
    <ligand>
        <name>substrate</name>
    </ligand>
</feature>
<feature type="binding site" evidence="1">
    <location>
        <position position="66"/>
    </location>
    <ligand>
        <name>substrate</name>
    </ligand>
</feature>
<feature type="binding site" evidence="1">
    <location>
        <position position="146"/>
    </location>
    <ligand>
        <name>NAD(+)</name>
        <dbReference type="ChEBI" id="CHEBI:57540"/>
    </ligand>
</feature>
<feature type="binding site" evidence="1">
    <location>
        <position position="175"/>
    </location>
    <ligand>
        <name>NAD(+)</name>
        <dbReference type="ChEBI" id="CHEBI:57540"/>
    </ligand>
</feature>
<feature type="binding site" evidence="1">
    <location>
        <position position="232"/>
    </location>
    <ligand>
        <name>NAD(+)</name>
        <dbReference type="ChEBI" id="CHEBI:57540"/>
    </ligand>
</feature>
<feature type="binding site" evidence="1">
    <location>
        <position position="257"/>
    </location>
    <ligand>
        <name>NAD(+)</name>
        <dbReference type="ChEBI" id="CHEBI:57540"/>
    </ligand>
</feature>
<feature type="binding site" evidence="1">
    <location>
        <position position="258"/>
    </location>
    <ligand>
        <name>substrate</name>
    </ligand>
</feature>
<evidence type="ECO:0000255" key="1">
    <source>
        <dbReference type="HAMAP-Rule" id="MF_01825"/>
    </source>
</evidence>
<protein>
    <recommendedName>
        <fullName evidence="1">Erythronate-4-phosphate dehydrogenase</fullName>
        <ecNumber evidence="1">1.1.1.290</ecNumber>
    </recommendedName>
</protein>
<comment type="function">
    <text evidence="1">Catalyzes the oxidation of erythronate-4-phosphate to 3-hydroxy-2-oxo-4-phosphonooxybutanoate.</text>
</comment>
<comment type="catalytic activity">
    <reaction evidence="1">
        <text>4-phospho-D-erythronate + NAD(+) = (R)-3-hydroxy-2-oxo-4-phosphooxybutanoate + NADH + H(+)</text>
        <dbReference type="Rhea" id="RHEA:18829"/>
        <dbReference type="ChEBI" id="CHEBI:15378"/>
        <dbReference type="ChEBI" id="CHEBI:57540"/>
        <dbReference type="ChEBI" id="CHEBI:57945"/>
        <dbReference type="ChEBI" id="CHEBI:58538"/>
        <dbReference type="ChEBI" id="CHEBI:58766"/>
        <dbReference type="EC" id="1.1.1.290"/>
    </reaction>
</comment>
<comment type="pathway">
    <text evidence="1">Cofactor biosynthesis; pyridoxine 5'-phosphate biosynthesis; pyridoxine 5'-phosphate from D-erythrose 4-phosphate: step 2/5.</text>
</comment>
<comment type="subunit">
    <text evidence="1">Homodimer.</text>
</comment>
<comment type="subcellular location">
    <subcellularLocation>
        <location evidence="1">Cytoplasm</location>
    </subcellularLocation>
</comment>
<comment type="similarity">
    <text evidence="1">Belongs to the D-isomer specific 2-hydroxyacid dehydrogenase family. PdxB subfamily.</text>
</comment>
<sequence length="378" mass="41135">MKILVDENMPYARELFSRLGEVKAVPGRPIPVAELDDADALMVRSVTKVNETLLAGKGIKFVGTATAGTDHVDDAWLAKAGIGFSAAPGCNAIAVVEYVFSSLLMLGERDGFALQDRTVGIVGVGNVGGRLQKRLEAMGIRTLLCDPPRADRGDEGDFRSLDELVEHADVITFHTPLFKDGAYKTFHLADETLIRRLKPGAILINACRGPVVDNAALLKCLEEGQNLSVVLDVWEPEPDLNVALLNRVDVATAHIAGYTLEGKARGTTQVFEAYSAFIGNAQQVALDTLLPAPEFGRITLHGPLDESSLKRLVHLVYDVRRDDALLRKVAGIPGEFDKLRKNYLERREWSSLYVICDDADAAALLNNLGFNAVHNPAR</sequence>
<dbReference type="EC" id="1.1.1.290" evidence="1"/>
<dbReference type="EMBL" id="CP000653">
    <property type="protein sequence ID" value="ABP61534.1"/>
    <property type="molecule type" value="Genomic_DNA"/>
</dbReference>
<dbReference type="RefSeq" id="WP_015959867.1">
    <property type="nucleotide sequence ID" value="NC_009436.1"/>
</dbReference>
<dbReference type="SMR" id="A4WCV4"/>
<dbReference type="STRING" id="399742.Ent638_2869"/>
<dbReference type="KEGG" id="ent:Ent638_2869"/>
<dbReference type="eggNOG" id="COG0111">
    <property type="taxonomic scope" value="Bacteria"/>
</dbReference>
<dbReference type="HOGENOM" id="CLU_019796_4_0_6"/>
<dbReference type="OrthoDB" id="9770208at2"/>
<dbReference type="UniPathway" id="UPA00244">
    <property type="reaction ID" value="UER00310"/>
</dbReference>
<dbReference type="Proteomes" id="UP000000230">
    <property type="component" value="Chromosome"/>
</dbReference>
<dbReference type="GO" id="GO:0005829">
    <property type="term" value="C:cytosol"/>
    <property type="evidence" value="ECO:0007669"/>
    <property type="project" value="TreeGrafter"/>
</dbReference>
<dbReference type="GO" id="GO:0033711">
    <property type="term" value="F:4-phosphoerythronate dehydrogenase activity"/>
    <property type="evidence" value="ECO:0007669"/>
    <property type="project" value="UniProtKB-EC"/>
</dbReference>
<dbReference type="GO" id="GO:0051287">
    <property type="term" value="F:NAD binding"/>
    <property type="evidence" value="ECO:0007669"/>
    <property type="project" value="InterPro"/>
</dbReference>
<dbReference type="GO" id="GO:0046983">
    <property type="term" value="F:protein dimerization activity"/>
    <property type="evidence" value="ECO:0007669"/>
    <property type="project" value="InterPro"/>
</dbReference>
<dbReference type="GO" id="GO:0036001">
    <property type="term" value="P:'de novo' pyridoxal 5'-phosphate biosynthetic process"/>
    <property type="evidence" value="ECO:0007669"/>
    <property type="project" value="TreeGrafter"/>
</dbReference>
<dbReference type="GO" id="GO:0008615">
    <property type="term" value="P:pyridoxine biosynthetic process"/>
    <property type="evidence" value="ECO:0007669"/>
    <property type="project" value="UniProtKB-UniRule"/>
</dbReference>
<dbReference type="CDD" id="cd12158">
    <property type="entry name" value="ErythrP_dh"/>
    <property type="match status" value="1"/>
</dbReference>
<dbReference type="FunFam" id="3.30.1370.170:FF:000001">
    <property type="entry name" value="Erythronate-4-phosphate dehydrogenase"/>
    <property type="match status" value="1"/>
</dbReference>
<dbReference type="FunFam" id="3.40.50.720:FF:000093">
    <property type="entry name" value="Erythronate-4-phosphate dehydrogenase"/>
    <property type="match status" value="1"/>
</dbReference>
<dbReference type="Gene3D" id="3.30.1370.170">
    <property type="match status" value="1"/>
</dbReference>
<dbReference type="Gene3D" id="3.40.50.720">
    <property type="entry name" value="NAD(P)-binding Rossmann-like Domain"/>
    <property type="match status" value="2"/>
</dbReference>
<dbReference type="HAMAP" id="MF_01825">
    <property type="entry name" value="PdxB"/>
    <property type="match status" value="1"/>
</dbReference>
<dbReference type="InterPro" id="IPR006139">
    <property type="entry name" value="D-isomer_2_OHA_DH_cat_dom"/>
</dbReference>
<dbReference type="InterPro" id="IPR029753">
    <property type="entry name" value="D-isomer_DH_CS"/>
</dbReference>
<dbReference type="InterPro" id="IPR029752">
    <property type="entry name" value="D-isomer_DH_CS1"/>
</dbReference>
<dbReference type="InterPro" id="IPR006140">
    <property type="entry name" value="D-isomer_DH_NAD-bd"/>
</dbReference>
<dbReference type="InterPro" id="IPR020921">
    <property type="entry name" value="Erythronate-4-P_DHase"/>
</dbReference>
<dbReference type="InterPro" id="IPR024531">
    <property type="entry name" value="Erythronate-4-P_DHase_dimer"/>
</dbReference>
<dbReference type="InterPro" id="IPR036291">
    <property type="entry name" value="NAD(P)-bd_dom_sf"/>
</dbReference>
<dbReference type="InterPro" id="IPR038251">
    <property type="entry name" value="PdxB_dimer_sf"/>
</dbReference>
<dbReference type="NCBIfam" id="NF001309">
    <property type="entry name" value="PRK00257.1"/>
    <property type="match status" value="1"/>
</dbReference>
<dbReference type="NCBIfam" id="NF011966">
    <property type="entry name" value="PRK15438.1"/>
    <property type="match status" value="1"/>
</dbReference>
<dbReference type="PANTHER" id="PTHR42938">
    <property type="entry name" value="FORMATE DEHYDROGENASE 1"/>
    <property type="match status" value="1"/>
</dbReference>
<dbReference type="PANTHER" id="PTHR42938:SF9">
    <property type="entry name" value="FORMATE DEHYDROGENASE 1"/>
    <property type="match status" value="1"/>
</dbReference>
<dbReference type="Pfam" id="PF00389">
    <property type="entry name" value="2-Hacid_dh"/>
    <property type="match status" value="1"/>
</dbReference>
<dbReference type="Pfam" id="PF02826">
    <property type="entry name" value="2-Hacid_dh_C"/>
    <property type="match status" value="1"/>
</dbReference>
<dbReference type="Pfam" id="PF11890">
    <property type="entry name" value="DUF3410"/>
    <property type="match status" value="1"/>
</dbReference>
<dbReference type="SUPFAM" id="SSF52283">
    <property type="entry name" value="Formate/glycerate dehydrogenase catalytic domain-like"/>
    <property type="match status" value="1"/>
</dbReference>
<dbReference type="SUPFAM" id="SSF51735">
    <property type="entry name" value="NAD(P)-binding Rossmann-fold domains"/>
    <property type="match status" value="1"/>
</dbReference>
<dbReference type="PROSITE" id="PS00065">
    <property type="entry name" value="D_2_HYDROXYACID_DH_1"/>
    <property type="match status" value="1"/>
</dbReference>
<dbReference type="PROSITE" id="PS00671">
    <property type="entry name" value="D_2_HYDROXYACID_DH_3"/>
    <property type="match status" value="1"/>
</dbReference>
<keyword id="KW-0963">Cytoplasm</keyword>
<keyword id="KW-0520">NAD</keyword>
<keyword id="KW-0560">Oxidoreductase</keyword>
<keyword id="KW-0664">Pyridoxine biosynthesis</keyword>
<organism>
    <name type="scientific">Enterobacter sp. (strain 638)</name>
    <dbReference type="NCBI Taxonomy" id="399742"/>
    <lineage>
        <taxon>Bacteria</taxon>
        <taxon>Pseudomonadati</taxon>
        <taxon>Pseudomonadota</taxon>
        <taxon>Gammaproteobacteria</taxon>
        <taxon>Enterobacterales</taxon>
        <taxon>Enterobacteriaceae</taxon>
        <taxon>Enterobacter</taxon>
    </lineage>
</organism>
<reference key="1">
    <citation type="journal article" date="2010" name="PLoS Genet.">
        <title>Genome sequence of the plant growth promoting endophytic bacterium Enterobacter sp. 638.</title>
        <authorList>
            <person name="Taghavi S."/>
            <person name="van der Lelie D."/>
            <person name="Hoffman A."/>
            <person name="Zhang Y.B."/>
            <person name="Walla M.D."/>
            <person name="Vangronsveld J."/>
            <person name="Newman L."/>
            <person name="Monchy S."/>
        </authorList>
    </citation>
    <scope>NUCLEOTIDE SEQUENCE [LARGE SCALE GENOMIC DNA]</scope>
    <source>
        <strain>638</strain>
    </source>
</reference>
<name>PDXB_ENT38</name>
<proteinExistence type="inferred from homology"/>
<gene>
    <name evidence="1" type="primary">pdxB</name>
    <name type="ordered locus">Ent638_2869</name>
</gene>
<accession>A4WCV4</accession>